<gene>
    <name evidence="1" type="primary">folE2</name>
    <name type="ordered locus">SAHV_0564</name>
</gene>
<evidence type="ECO:0000255" key="1">
    <source>
        <dbReference type="HAMAP-Rule" id="MF_01527"/>
    </source>
</evidence>
<accession>A7WZ02</accession>
<dbReference type="EC" id="3.5.4.16" evidence="1"/>
<dbReference type="EMBL" id="AP009324">
    <property type="protein sequence ID" value="BAF77447.1"/>
    <property type="molecule type" value="Genomic_DNA"/>
</dbReference>
<dbReference type="RefSeq" id="WP_000134236.1">
    <property type="nucleotide sequence ID" value="NC_009782.1"/>
</dbReference>
<dbReference type="SMR" id="A7WZ02"/>
<dbReference type="KEGG" id="saw:SAHV_0564"/>
<dbReference type="HOGENOM" id="CLU_062816_1_1_9"/>
<dbReference type="UniPathway" id="UPA00848">
    <property type="reaction ID" value="UER00151"/>
</dbReference>
<dbReference type="GO" id="GO:0003934">
    <property type="term" value="F:GTP cyclohydrolase I activity"/>
    <property type="evidence" value="ECO:0007669"/>
    <property type="project" value="UniProtKB-UniRule"/>
</dbReference>
<dbReference type="GO" id="GO:0046654">
    <property type="term" value="P:tetrahydrofolate biosynthetic process"/>
    <property type="evidence" value="ECO:0007669"/>
    <property type="project" value="UniProtKB-UniRule"/>
</dbReference>
<dbReference type="Gene3D" id="3.10.270.10">
    <property type="entry name" value="Urate Oxidase"/>
    <property type="match status" value="1"/>
</dbReference>
<dbReference type="HAMAP" id="MF_01527_B">
    <property type="entry name" value="GTP_cyclohydrol_B"/>
    <property type="match status" value="1"/>
</dbReference>
<dbReference type="InterPro" id="IPR022838">
    <property type="entry name" value="GTP_cyclohydrolase_FolE2"/>
</dbReference>
<dbReference type="InterPro" id="IPR003801">
    <property type="entry name" value="GTP_cyclohydrolase_FolE2/MptA"/>
</dbReference>
<dbReference type="NCBIfam" id="NF010200">
    <property type="entry name" value="PRK13674.1-1"/>
    <property type="match status" value="1"/>
</dbReference>
<dbReference type="PANTHER" id="PTHR36445">
    <property type="entry name" value="GTP CYCLOHYDROLASE MPTA"/>
    <property type="match status" value="1"/>
</dbReference>
<dbReference type="PANTHER" id="PTHR36445:SF1">
    <property type="entry name" value="GTP CYCLOHYDROLASE MPTA"/>
    <property type="match status" value="1"/>
</dbReference>
<dbReference type="Pfam" id="PF02649">
    <property type="entry name" value="GCHY-1"/>
    <property type="match status" value="1"/>
</dbReference>
<comment type="function">
    <text evidence="1">Converts GTP to 7,8-dihydroneopterin triphosphate.</text>
</comment>
<comment type="catalytic activity">
    <reaction evidence="1">
        <text>GTP + H2O = 7,8-dihydroneopterin 3'-triphosphate + formate + H(+)</text>
        <dbReference type="Rhea" id="RHEA:17473"/>
        <dbReference type="ChEBI" id="CHEBI:15377"/>
        <dbReference type="ChEBI" id="CHEBI:15378"/>
        <dbReference type="ChEBI" id="CHEBI:15740"/>
        <dbReference type="ChEBI" id="CHEBI:37565"/>
        <dbReference type="ChEBI" id="CHEBI:58462"/>
        <dbReference type="EC" id="3.5.4.16"/>
    </reaction>
</comment>
<comment type="pathway">
    <text evidence="1">Cofactor biosynthesis; 7,8-dihydroneopterin triphosphate biosynthesis; 7,8-dihydroneopterin triphosphate from GTP: step 1/1.</text>
</comment>
<comment type="similarity">
    <text evidence="1">Belongs to the GTP cyclohydrolase IV family.</text>
</comment>
<organism>
    <name type="scientific">Staphylococcus aureus (strain Mu3 / ATCC 700698)</name>
    <dbReference type="NCBI Taxonomy" id="418127"/>
    <lineage>
        <taxon>Bacteria</taxon>
        <taxon>Bacillati</taxon>
        <taxon>Bacillota</taxon>
        <taxon>Bacilli</taxon>
        <taxon>Bacillales</taxon>
        <taxon>Staphylococcaceae</taxon>
        <taxon>Staphylococcus</taxon>
    </lineage>
</organism>
<feature type="chain" id="PRO_1000068670" description="GTP cyclohydrolase FolE2">
    <location>
        <begin position="1"/>
        <end position="292"/>
    </location>
</feature>
<feature type="site" description="May be catalytically important" evidence="1">
    <location>
        <position position="176"/>
    </location>
</feature>
<keyword id="KW-0378">Hydrolase</keyword>
<reference key="1">
    <citation type="journal article" date="2008" name="Antimicrob. Agents Chemother.">
        <title>Mutated response regulator graR is responsible for phenotypic conversion of Staphylococcus aureus from heterogeneous vancomycin-intermediate resistance to vancomycin-intermediate resistance.</title>
        <authorList>
            <person name="Neoh H.-M."/>
            <person name="Cui L."/>
            <person name="Yuzawa H."/>
            <person name="Takeuchi F."/>
            <person name="Matsuo M."/>
            <person name="Hiramatsu K."/>
        </authorList>
    </citation>
    <scope>NUCLEOTIDE SEQUENCE [LARGE SCALE GENOMIC DNA]</scope>
    <source>
        <strain>Mu3 / ATCC 700698</strain>
    </source>
</reference>
<sequence length="292" mass="33481">MTEFDLSTREGRWKHFGSVDPIEGTKPTTKNEMTDLQSTHKDFLFEIEEVGIKNLVYPVLVDQYQTAGTFSFSTSLTKDEKGINMSRIIESVEKHYDNGIELEFNTLYQVLRTLQTNMKQNAAGVDVSGKWFFDRYSPTTNIKAVGNADVTYGLAIDGDKVTRKELTIEATVTTLCPCSKEISEYSAHNQRGVVTVKTYINKDQNIVDDYKNKILDAMEANASSILYPILKRPDEKRVTERAYENPRFVEDLIRLIAADLVEFDWLDGFDIECRNEESIHQHDAFAKLKYRK</sequence>
<name>GCH4_STAA1</name>
<proteinExistence type="inferred from homology"/>
<protein>
    <recommendedName>
        <fullName evidence="1">GTP cyclohydrolase FolE2</fullName>
        <ecNumber evidence="1">3.5.4.16</ecNumber>
    </recommendedName>
</protein>